<sequence>MSRVLIIESSARQQDSVSRQLTQTFISQWKAAHPADQITVRDLAVNPVPHLDINLLGGWMKSAEQRNDSEQASLDRSNELTDELLAADVLVMAAPMYNFAIPSTLKAWLDHVLRAGVTFKYTETGPQGLLSGKRAYVLTARGGIYAGGPADHQEPYLRQVMGFIGINDVTFIHAEGMNLGGDFQEKGLNQANAKLSQVA</sequence>
<gene>
    <name evidence="1" type="primary">azoR2</name>
    <name type="ordered locus">Pfl01_1432</name>
</gene>
<reference key="1">
    <citation type="journal article" date="2009" name="Genome Biol.">
        <title>Genomic and genetic analyses of diversity and plant interactions of Pseudomonas fluorescens.</title>
        <authorList>
            <person name="Silby M.W."/>
            <person name="Cerdeno-Tarraga A.M."/>
            <person name="Vernikos G.S."/>
            <person name="Giddens S.R."/>
            <person name="Jackson R.W."/>
            <person name="Preston G.M."/>
            <person name="Zhang X.-X."/>
            <person name="Moon C.D."/>
            <person name="Gehrig S.M."/>
            <person name="Godfrey S.A.C."/>
            <person name="Knight C.G."/>
            <person name="Malone J.G."/>
            <person name="Robinson Z."/>
            <person name="Spiers A.J."/>
            <person name="Harris S."/>
            <person name="Challis G.L."/>
            <person name="Yaxley A.M."/>
            <person name="Harris D."/>
            <person name="Seeger K."/>
            <person name="Murphy L."/>
            <person name="Rutter S."/>
            <person name="Squares R."/>
            <person name="Quail M.A."/>
            <person name="Saunders E."/>
            <person name="Mavromatis K."/>
            <person name="Brettin T.S."/>
            <person name="Bentley S.D."/>
            <person name="Hothersall J."/>
            <person name="Stephens E."/>
            <person name="Thomas C.M."/>
            <person name="Parkhill J."/>
            <person name="Levy S.B."/>
            <person name="Rainey P.B."/>
            <person name="Thomson N.R."/>
        </authorList>
    </citation>
    <scope>NUCLEOTIDE SEQUENCE [LARGE SCALE GENOMIC DNA]</scope>
    <source>
        <strain>Pf0-1</strain>
    </source>
</reference>
<organism>
    <name type="scientific">Pseudomonas fluorescens (strain Pf0-1)</name>
    <dbReference type="NCBI Taxonomy" id="205922"/>
    <lineage>
        <taxon>Bacteria</taxon>
        <taxon>Pseudomonadati</taxon>
        <taxon>Pseudomonadota</taxon>
        <taxon>Gammaproteobacteria</taxon>
        <taxon>Pseudomonadales</taxon>
        <taxon>Pseudomonadaceae</taxon>
        <taxon>Pseudomonas</taxon>
    </lineage>
</organism>
<evidence type="ECO:0000255" key="1">
    <source>
        <dbReference type="HAMAP-Rule" id="MF_01216"/>
    </source>
</evidence>
<comment type="function">
    <text evidence="1">Quinone reductase that provides resistance to thiol-specific stress caused by electrophilic quinones.</text>
</comment>
<comment type="function">
    <text evidence="1">Also exhibits azoreductase activity. Catalyzes the reductive cleavage of the azo bond in aromatic azo compounds to the corresponding amines.</text>
</comment>
<comment type="catalytic activity">
    <reaction evidence="1">
        <text>2 a quinone + NADH + H(+) = 2 a 1,4-benzosemiquinone + NAD(+)</text>
        <dbReference type="Rhea" id="RHEA:65952"/>
        <dbReference type="ChEBI" id="CHEBI:15378"/>
        <dbReference type="ChEBI" id="CHEBI:57540"/>
        <dbReference type="ChEBI" id="CHEBI:57945"/>
        <dbReference type="ChEBI" id="CHEBI:132124"/>
        <dbReference type="ChEBI" id="CHEBI:134225"/>
    </reaction>
</comment>
<comment type="catalytic activity">
    <reaction evidence="1">
        <text>N,N-dimethyl-1,4-phenylenediamine + anthranilate + 2 NAD(+) = 2-(4-dimethylaminophenyl)diazenylbenzoate + 2 NADH + 2 H(+)</text>
        <dbReference type="Rhea" id="RHEA:55872"/>
        <dbReference type="ChEBI" id="CHEBI:15378"/>
        <dbReference type="ChEBI" id="CHEBI:15783"/>
        <dbReference type="ChEBI" id="CHEBI:16567"/>
        <dbReference type="ChEBI" id="CHEBI:57540"/>
        <dbReference type="ChEBI" id="CHEBI:57945"/>
        <dbReference type="ChEBI" id="CHEBI:71579"/>
        <dbReference type="EC" id="1.7.1.17"/>
    </reaction>
</comment>
<comment type="cofactor">
    <cofactor evidence="1">
        <name>FMN</name>
        <dbReference type="ChEBI" id="CHEBI:58210"/>
    </cofactor>
    <text evidence="1">Binds 1 FMN per subunit.</text>
</comment>
<comment type="subunit">
    <text evidence="1">Homodimer.</text>
</comment>
<comment type="similarity">
    <text evidence="1">Belongs to the azoreductase type 1 family.</text>
</comment>
<accession>Q3KGD1</accession>
<dbReference type="EC" id="1.6.5.-" evidence="1"/>
<dbReference type="EC" id="1.7.1.17" evidence="1"/>
<dbReference type="EMBL" id="CP000094">
    <property type="protein sequence ID" value="ABA73175.1"/>
    <property type="molecule type" value="Genomic_DNA"/>
</dbReference>
<dbReference type="RefSeq" id="WP_011332962.1">
    <property type="nucleotide sequence ID" value="NC_007492.2"/>
</dbReference>
<dbReference type="SMR" id="Q3KGD1"/>
<dbReference type="KEGG" id="pfo:Pfl01_1432"/>
<dbReference type="eggNOG" id="COG1182">
    <property type="taxonomic scope" value="Bacteria"/>
</dbReference>
<dbReference type="HOGENOM" id="CLU_088964_0_0_6"/>
<dbReference type="Proteomes" id="UP000002704">
    <property type="component" value="Chromosome"/>
</dbReference>
<dbReference type="GO" id="GO:0009055">
    <property type="term" value="F:electron transfer activity"/>
    <property type="evidence" value="ECO:0007669"/>
    <property type="project" value="UniProtKB-UniRule"/>
</dbReference>
<dbReference type="GO" id="GO:0010181">
    <property type="term" value="F:FMN binding"/>
    <property type="evidence" value="ECO:0007669"/>
    <property type="project" value="UniProtKB-UniRule"/>
</dbReference>
<dbReference type="GO" id="GO:0016652">
    <property type="term" value="F:oxidoreductase activity, acting on NAD(P)H as acceptor"/>
    <property type="evidence" value="ECO:0007669"/>
    <property type="project" value="UniProtKB-UniRule"/>
</dbReference>
<dbReference type="GO" id="GO:0016655">
    <property type="term" value="F:oxidoreductase activity, acting on NAD(P)H, quinone or similar compound as acceptor"/>
    <property type="evidence" value="ECO:0007669"/>
    <property type="project" value="InterPro"/>
</dbReference>
<dbReference type="Gene3D" id="3.40.50.360">
    <property type="match status" value="1"/>
</dbReference>
<dbReference type="HAMAP" id="MF_01216">
    <property type="entry name" value="Azoreductase_type1"/>
    <property type="match status" value="1"/>
</dbReference>
<dbReference type="InterPro" id="IPR003680">
    <property type="entry name" value="Flavodoxin_fold"/>
</dbReference>
<dbReference type="InterPro" id="IPR029039">
    <property type="entry name" value="Flavoprotein-like_sf"/>
</dbReference>
<dbReference type="InterPro" id="IPR050104">
    <property type="entry name" value="FMN-dep_NADH:Q_OxRdtase_AzoR1"/>
</dbReference>
<dbReference type="InterPro" id="IPR023048">
    <property type="entry name" value="NADH:quinone_OxRdtase_FMN_depd"/>
</dbReference>
<dbReference type="PANTHER" id="PTHR43741">
    <property type="entry name" value="FMN-DEPENDENT NADH-AZOREDUCTASE 1"/>
    <property type="match status" value="1"/>
</dbReference>
<dbReference type="PANTHER" id="PTHR43741:SF2">
    <property type="entry name" value="FMN-DEPENDENT NADH:QUINONE OXIDOREDUCTASE"/>
    <property type="match status" value="1"/>
</dbReference>
<dbReference type="Pfam" id="PF02525">
    <property type="entry name" value="Flavodoxin_2"/>
    <property type="match status" value="1"/>
</dbReference>
<dbReference type="SUPFAM" id="SSF52218">
    <property type="entry name" value="Flavoproteins"/>
    <property type="match status" value="1"/>
</dbReference>
<feature type="chain" id="PRO_0000245950" description="FMN-dependent NADH:quinone oxidoreductase 2">
    <location>
        <begin position="1"/>
        <end position="199"/>
    </location>
</feature>
<feature type="binding site" evidence="1">
    <location>
        <position position="10"/>
    </location>
    <ligand>
        <name>FMN</name>
        <dbReference type="ChEBI" id="CHEBI:58210"/>
    </ligand>
</feature>
<feature type="binding site" evidence="1">
    <location>
        <begin position="16"/>
        <end position="18"/>
    </location>
    <ligand>
        <name>FMN</name>
        <dbReference type="ChEBI" id="CHEBI:58210"/>
    </ligand>
</feature>
<feature type="binding site" evidence="1">
    <location>
        <begin position="96"/>
        <end position="99"/>
    </location>
    <ligand>
        <name>FMN</name>
        <dbReference type="ChEBI" id="CHEBI:58210"/>
    </ligand>
</feature>
<proteinExistence type="inferred from homology"/>
<keyword id="KW-0285">Flavoprotein</keyword>
<keyword id="KW-0288">FMN</keyword>
<keyword id="KW-0520">NAD</keyword>
<keyword id="KW-0560">Oxidoreductase</keyword>
<name>AZOR2_PSEPF</name>
<protein>
    <recommendedName>
        <fullName evidence="1">FMN-dependent NADH:quinone oxidoreductase 2</fullName>
        <ecNumber evidence="1">1.6.5.-</ecNumber>
    </recommendedName>
    <alternativeName>
        <fullName evidence="1">Azo-dye reductase 2</fullName>
    </alternativeName>
    <alternativeName>
        <fullName evidence="1">FMN-dependent NADH-azo compound oxidoreductase 2</fullName>
    </alternativeName>
    <alternativeName>
        <fullName evidence="1">FMN-dependent NADH-azoreductase 2</fullName>
        <ecNumber evidence="1">1.7.1.17</ecNumber>
    </alternativeName>
</protein>